<protein>
    <recommendedName>
        <fullName>Envelope glycoprotein I</fullName>
    </recommendedName>
</protein>
<proteinExistence type="inferred from homology"/>
<sequence length="109" mass="11571">MGRLLGFLLALGPWALVAGVVIRGPTISLVSDSLLAAGAVGANGSFLEDLEVPGELHFLGPQVPHVTYYDGSVELLHYPPDARCPRAVLVEEMTACPRRNAVAFTLCRS</sequence>
<reference key="1">
    <citation type="journal article" date="1992" name="J. Gen. Virol.">
        <title>Nucleotide sequence analysis of genes encoding glycoproteins D and J in simian herpes B virus.</title>
        <authorList>
            <person name="Bennett A.M."/>
            <person name="Harrington L."/>
            <person name="Kelly D.C."/>
        </authorList>
    </citation>
    <scope>NUCLEOTIDE SEQUENCE [GENOMIC DNA]</scope>
</reference>
<evidence type="ECO:0000250" key="1"/>
<evidence type="ECO:0000255" key="2"/>
<evidence type="ECO:0000305" key="3"/>
<name>GI_CHV1</name>
<feature type="chain" id="PRO_0000115773" description="Envelope glycoprotein I">
    <location>
        <begin position="1"/>
        <end position="109" status="greater than"/>
    </location>
</feature>
<feature type="glycosylation site" description="N-linked (GlcNAc...) asparagine; by host" evidence="2">
    <location>
        <position position="43"/>
    </location>
</feature>
<feature type="non-terminal residue">
    <location>
        <position position="109"/>
    </location>
</feature>
<gene>
    <name type="primary">gI</name>
</gene>
<comment type="function">
    <text>In epithelial cells, the heterodimer gE/gI is required for the cell-to-cell spread of the virus, by sorting nascent virions to cell junctions. Once the virus reaches the cell junctions, virus particles can spread to adjacent cells extremely rapidly through interactions with cellular receptors that accumulate at these junctions. Implicated in basolateral spread in polarized cells. In neuronal cells, gE/gI is essential for the anterograde spread of the infection throughout the host nervous system. Together with US9, the heterodimer gE/gI is involved in the sorting and transport of viral structural components toward axon tips.</text>
</comment>
<comment type="subunit">
    <text evidence="1">Interacts with gE.</text>
</comment>
<comment type="subcellular location">
    <subcellularLocation>
        <location evidence="1">Virion membrane</location>
        <topology evidence="1">Single-pass membrane protein</topology>
    </subcellularLocation>
    <subcellularLocation>
        <location evidence="3">Host cell membrane</location>
        <topology evidence="3">Single-pass type I membrane protein</topology>
    </subcellularLocation>
    <subcellularLocation>
        <location evidence="1">Host cell junction</location>
    </subcellularLocation>
    <subcellularLocation>
        <location evidence="1">Host Golgi apparatus membrane</location>
        <topology evidence="1">Single-pass type I membrane protein</topology>
    </subcellularLocation>
    <text evidence="1">During virion morphogenesis, this protein probably accumulates in the endosomes and trans-Golgi where secondary envelopment occurs. It is probably transported to the cell surface from where it is endocytosed and directed to the trans-Golgi network (TGN). The heterodimer gE/gI then redistribute to cell junctions to promote cell-cell spread later in the infection (By similarity).</text>
</comment>
<comment type="similarity">
    <text evidence="3">Belongs to the alphaherpesvirinae glycoprotein I family.</text>
</comment>
<keyword id="KW-0325">Glycoprotein</keyword>
<keyword id="KW-1031">Host cell junction</keyword>
<keyword id="KW-1032">Host cell membrane</keyword>
<keyword id="KW-1040">Host Golgi apparatus</keyword>
<keyword id="KW-1043">Host membrane</keyword>
<keyword id="KW-0472">Membrane</keyword>
<keyword id="KW-0597">Phosphoprotein</keyword>
<keyword id="KW-0812">Transmembrane</keyword>
<keyword id="KW-0261">Viral envelope protein</keyword>
<keyword id="KW-0946">Virion</keyword>
<organism>
    <name type="scientific">Cercopithecine herpesvirus 1</name>
    <name type="common">CeHV-1</name>
    <name type="synonym">Simian herpes B virus</name>
    <dbReference type="NCBI Taxonomy" id="10325"/>
    <lineage>
        <taxon>Viruses</taxon>
        <taxon>Duplodnaviria</taxon>
        <taxon>Heunggongvirae</taxon>
        <taxon>Peploviricota</taxon>
        <taxon>Herviviricetes</taxon>
        <taxon>Herpesvirales</taxon>
        <taxon>Orthoherpesviridae</taxon>
        <taxon>Alphaherpesvirinae</taxon>
        <taxon>Simplexvirus</taxon>
        <taxon>Simplexvirus macacinealpha1</taxon>
    </lineage>
</organism>
<dbReference type="EMBL" id="S48101">
    <property type="protein sequence ID" value="AAB24130.1"/>
    <property type="molecule type" value="Genomic_DNA"/>
</dbReference>
<dbReference type="PIR" id="PQ0494">
    <property type="entry name" value="PQ0494"/>
</dbReference>
<dbReference type="GlyCosmos" id="P36343">
    <property type="glycosylation" value="1 site, No reported glycans"/>
</dbReference>
<dbReference type="GO" id="GO:0043657">
    <property type="term" value="C:host cell"/>
    <property type="evidence" value="ECO:0007669"/>
    <property type="project" value="InterPro"/>
</dbReference>
<dbReference type="GO" id="GO:0044178">
    <property type="term" value="C:host cell Golgi membrane"/>
    <property type="evidence" value="ECO:0007669"/>
    <property type="project" value="UniProtKB-SubCell"/>
</dbReference>
<dbReference type="GO" id="GO:0044156">
    <property type="term" value="C:host cell junction"/>
    <property type="evidence" value="ECO:0007669"/>
    <property type="project" value="UniProtKB-SubCell"/>
</dbReference>
<dbReference type="GO" id="GO:0016020">
    <property type="term" value="C:membrane"/>
    <property type="evidence" value="ECO:0007669"/>
    <property type="project" value="UniProtKB-KW"/>
</dbReference>
<dbReference type="GO" id="GO:0019031">
    <property type="term" value="C:viral envelope"/>
    <property type="evidence" value="ECO:0007669"/>
    <property type="project" value="UniProtKB-KW"/>
</dbReference>
<dbReference type="GO" id="GO:0055036">
    <property type="term" value="C:virion membrane"/>
    <property type="evidence" value="ECO:0007669"/>
    <property type="project" value="UniProtKB-SubCell"/>
</dbReference>
<dbReference type="InterPro" id="IPR002874">
    <property type="entry name" value="Herpes_gI"/>
</dbReference>
<dbReference type="Pfam" id="PF01688">
    <property type="entry name" value="Herpes_gI"/>
    <property type="match status" value="1"/>
</dbReference>
<organismHost>
    <name type="scientific">Homo sapiens</name>
    <name type="common">Human</name>
    <dbReference type="NCBI Taxonomy" id="9606"/>
</organismHost>
<organismHost>
    <name type="scientific">Macaca fascicularis</name>
    <name type="common">Crab-eating macaque</name>
    <name type="synonym">Cynomolgus monkey</name>
    <dbReference type="NCBI Taxonomy" id="9541"/>
</organismHost>
<organismHost>
    <name type="scientific">Macaca leonina</name>
    <name type="common">Northern pig-tailed macaque</name>
    <name type="synonym">Macaca nemestrina leonina</name>
    <dbReference type="NCBI Taxonomy" id="90387"/>
</organismHost>
<organismHost>
    <name type="scientific">Macaca mulatta</name>
    <name type="common">Rhesus macaque</name>
    <dbReference type="NCBI Taxonomy" id="9544"/>
</organismHost>
<organismHost>
    <name type="scientific">Macaca nemestrina</name>
    <name type="common">Pig-tailed macaque</name>
    <dbReference type="NCBI Taxonomy" id="9545"/>
</organismHost>
<accession>P36343</accession>